<sequence>MTSPWSAFPVQIPQPSIRGLSQITKSLFISNGVAANNKLLLSSNQITTVINVSVEVANTFYEDIQYVQVPVVDAPVARLSNFFDSVADRIHSVEMQKGRTLLHCAAGVSRSAALCLAYLMKYHAMSLVDAHTWTKSCRPIIRPNSGFWEQLIHYELQLFGKNTMQMMDSPMGRIPDIYEKETRLMIPL</sequence>
<proteinExistence type="evidence at protein level"/>
<dbReference type="EC" id="3.1.3.16" evidence="4"/>
<dbReference type="EC" id="3.1.3.48" evidence="4"/>
<dbReference type="EMBL" id="AK015917">
    <property type="protein sequence ID" value="BAC25470.1"/>
    <property type="molecule type" value="mRNA"/>
</dbReference>
<dbReference type="EMBL" id="AK081916">
    <property type="protein sequence ID" value="BAC38371.1"/>
    <property type="molecule type" value="mRNA"/>
</dbReference>
<dbReference type="EMBL" id="AL731853">
    <property type="status" value="NOT_ANNOTATED_CDS"/>
    <property type="molecule type" value="Genomic_DNA"/>
</dbReference>
<dbReference type="EMBL" id="BC020036">
    <property type="protein sequence ID" value="AAH20036.1"/>
    <property type="molecule type" value="mRNA"/>
</dbReference>
<dbReference type="CCDS" id="CCDS24369.1"/>
<dbReference type="RefSeq" id="NP_776106.1">
    <property type="nucleotide sequence ID" value="NM_173745.5"/>
</dbReference>
<dbReference type="RefSeq" id="XP_006514936.1">
    <property type="nucleotide sequence ID" value="XM_006514873.4"/>
</dbReference>
<dbReference type="SMR" id="Q8VE01"/>
<dbReference type="BioGRID" id="217311">
    <property type="interactions" value="1"/>
</dbReference>
<dbReference type="FunCoup" id="Q8VE01">
    <property type="interactions" value="1266"/>
</dbReference>
<dbReference type="STRING" id="10090.ENSMUSP00000057346"/>
<dbReference type="iPTMnet" id="Q8VE01"/>
<dbReference type="PhosphoSitePlus" id="Q8VE01"/>
<dbReference type="PaxDb" id="10090-ENSMUSP00000057346"/>
<dbReference type="Antibodypedia" id="24819">
    <property type="antibodies" value="37 antibodies from 12 providers"/>
</dbReference>
<dbReference type="DNASU" id="75219"/>
<dbReference type="Ensembl" id="ENSMUST00000055931.5">
    <property type="protein sequence ID" value="ENSMUSP00000057346.5"/>
    <property type="gene ID" value="ENSMUSG00000047205.13"/>
</dbReference>
<dbReference type="Ensembl" id="ENSMUST00000109996.8">
    <property type="protein sequence ID" value="ENSMUSP00000105624.2"/>
    <property type="gene ID" value="ENSMUSG00000047205.13"/>
</dbReference>
<dbReference type="GeneID" id="75219"/>
<dbReference type="KEGG" id="mmu:75219"/>
<dbReference type="UCSC" id="uc007htu.2">
    <property type="organism name" value="mouse"/>
</dbReference>
<dbReference type="AGR" id="MGI:1922469"/>
<dbReference type="CTD" id="150290"/>
<dbReference type="MGI" id="MGI:1922469">
    <property type="gene designation" value="Dusp18"/>
</dbReference>
<dbReference type="VEuPathDB" id="HostDB:ENSMUSG00000047205"/>
<dbReference type="eggNOG" id="KOG1718">
    <property type="taxonomic scope" value="Eukaryota"/>
</dbReference>
<dbReference type="GeneTree" id="ENSGT00940000161186"/>
<dbReference type="HOGENOM" id="CLU_027074_3_2_1"/>
<dbReference type="InParanoid" id="Q8VE01"/>
<dbReference type="OMA" id="TVRWIDD"/>
<dbReference type="OrthoDB" id="285418at2759"/>
<dbReference type="PhylomeDB" id="Q8VE01"/>
<dbReference type="TreeFam" id="TF316009"/>
<dbReference type="BioGRID-ORCS" id="75219">
    <property type="hits" value="5 hits in 77 CRISPR screens"/>
</dbReference>
<dbReference type="ChiTaRS" id="Dusp18">
    <property type="organism name" value="mouse"/>
</dbReference>
<dbReference type="PRO" id="PR:Q8VE01"/>
<dbReference type="Proteomes" id="UP000000589">
    <property type="component" value="Chromosome 11"/>
</dbReference>
<dbReference type="RNAct" id="Q8VE01">
    <property type="molecule type" value="protein"/>
</dbReference>
<dbReference type="Bgee" id="ENSMUSG00000047205">
    <property type="expression patterns" value="Expressed in animal zygote and 187 other cell types or tissues"/>
</dbReference>
<dbReference type="GO" id="GO:0005737">
    <property type="term" value="C:cytoplasm"/>
    <property type="evidence" value="ECO:0000250"/>
    <property type="project" value="UniProtKB"/>
</dbReference>
<dbReference type="GO" id="GO:0031314">
    <property type="term" value="C:extrinsic component of mitochondrial inner membrane"/>
    <property type="evidence" value="ECO:0000250"/>
    <property type="project" value="MGI"/>
</dbReference>
<dbReference type="GO" id="GO:0005743">
    <property type="term" value="C:mitochondrial inner membrane"/>
    <property type="evidence" value="ECO:0000250"/>
    <property type="project" value="MGI"/>
</dbReference>
<dbReference type="GO" id="GO:0005758">
    <property type="term" value="C:mitochondrial intermembrane space"/>
    <property type="evidence" value="ECO:0000250"/>
    <property type="project" value="MGI"/>
</dbReference>
<dbReference type="GO" id="GO:0005739">
    <property type="term" value="C:mitochondrion"/>
    <property type="evidence" value="ECO:0000250"/>
    <property type="project" value="MGI"/>
</dbReference>
<dbReference type="GO" id="GO:0005654">
    <property type="term" value="C:nucleoplasm"/>
    <property type="evidence" value="ECO:0007669"/>
    <property type="project" value="Ensembl"/>
</dbReference>
<dbReference type="GO" id="GO:0005634">
    <property type="term" value="C:nucleus"/>
    <property type="evidence" value="ECO:0000250"/>
    <property type="project" value="UniProtKB"/>
</dbReference>
<dbReference type="GO" id="GO:0017017">
    <property type="term" value="F:MAP kinase tyrosine/serine/threonine phosphatase activity"/>
    <property type="evidence" value="ECO:0007669"/>
    <property type="project" value="InterPro"/>
</dbReference>
<dbReference type="GO" id="GO:0016791">
    <property type="term" value="F:phosphatase activity"/>
    <property type="evidence" value="ECO:0000250"/>
    <property type="project" value="UniProtKB"/>
</dbReference>
<dbReference type="GO" id="GO:0004722">
    <property type="term" value="F:protein serine/threonine phosphatase activity"/>
    <property type="evidence" value="ECO:0007669"/>
    <property type="project" value="UniProtKB-EC"/>
</dbReference>
<dbReference type="GO" id="GO:0004725">
    <property type="term" value="F:protein tyrosine phosphatase activity"/>
    <property type="evidence" value="ECO:0007669"/>
    <property type="project" value="UniProtKB-EC"/>
</dbReference>
<dbReference type="GO" id="GO:0008138">
    <property type="term" value="F:protein tyrosine/serine/threonine phosphatase activity"/>
    <property type="evidence" value="ECO:0000250"/>
    <property type="project" value="UniProtKB"/>
</dbReference>
<dbReference type="GO" id="GO:0016311">
    <property type="term" value="P:dephosphorylation"/>
    <property type="evidence" value="ECO:0000250"/>
    <property type="project" value="UniProtKB"/>
</dbReference>
<dbReference type="GO" id="GO:0035970">
    <property type="term" value="P:peptidyl-threonine dephosphorylation"/>
    <property type="evidence" value="ECO:0000250"/>
    <property type="project" value="UniProtKB"/>
</dbReference>
<dbReference type="GO" id="GO:0035335">
    <property type="term" value="P:peptidyl-tyrosine dephosphorylation"/>
    <property type="evidence" value="ECO:0000250"/>
    <property type="project" value="UniProtKB"/>
</dbReference>
<dbReference type="GO" id="GO:0033365">
    <property type="term" value="P:protein localization to organelle"/>
    <property type="evidence" value="ECO:0000250"/>
    <property type="project" value="MGI"/>
</dbReference>
<dbReference type="GO" id="GO:0006612">
    <property type="term" value="P:protein targeting to membrane"/>
    <property type="evidence" value="ECO:0000250"/>
    <property type="project" value="MGI"/>
</dbReference>
<dbReference type="GO" id="GO:0006626">
    <property type="term" value="P:protein targeting to mitochondrion"/>
    <property type="evidence" value="ECO:0000250"/>
    <property type="project" value="MGI"/>
</dbReference>
<dbReference type="GO" id="GO:0046677">
    <property type="term" value="P:response to antibiotic"/>
    <property type="evidence" value="ECO:0000250"/>
    <property type="project" value="MGI"/>
</dbReference>
<dbReference type="FunFam" id="3.90.190.10:FF:000049">
    <property type="entry name" value="Dual specificity protein phosphatase 14"/>
    <property type="match status" value="1"/>
</dbReference>
<dbReference type="Gene3D" id="3.90.190.10">
    <property type="entry name" value="Protein tyrosine phosphatase superfamily"/>
    <property type="match status" value="1"/>
</dbReference>
<dbReference type="InterPro" id="IPR020420">
    <property type="entry name" value="Atypical_DUSP_subfamB"/>
</dbReference>
<dbReference type="InterPro" id="IPR000340">
    <property type="entry name" value="Dual-sp_phosphatase_cat-dom"/>
</dbReference>
<dbReference type="InterPro" id="IPR029021">
    <property type="entry name" value="Prot-tyrosine_phosphatase-like"/>
</dbReference>
<dbReference type="InterPro" id="IPR016130">
    <property type="entry name" value="Tyr_Pase_AS"/>
</dbReference>
<dbReference type="InterPro" id="IPR000387">
    <property type="entry name" value="Tyr_Pase_dom"/>
</dbReference>
<dbReference type="InterPro" id="IPR020422">
    <property type="entry name" value="TYR_PHOSPHATASE_DUAL_dom"/>
</dbReference>
<dbReference type="PANTHER" id="PTHR46495:SF2">
    <property type="entry name" value="DUAL SPECIFICITY PROTEIN PHOSPHATASE 18"/>
    <property type="match status" value="1"/>
</dbReference>
<dbReference type="PANTHER" id="PTHR46495">
    <property type="entry name" value="DUAL SPECIFICITY PROTEIN PHOSPHATASE 21"/>
    <property type="match status" value="1"/>
</dbReference>
<dbReference type="Pfam" id="PF00782">
    <property type="entry name" value="DSPc"/>
    <property type="match status" value="1"/>
</dbReference>
<dbReference type="PRINTS" id="PR01908">
    <property type="entry name" value="ADSPHPHTASE"/>
</dbReference>
<dbReference type="PRINTS" id="PR01910">
    <property type="entry name" value="ADSPHPHTASEB"/>
</dbReference>
<dbReference type="SMART" id="SM00195">
    <property type="entry name" value="DSPc"/>
    <property type="match status" value="1"/>
</dbReference>
<dbReference type="SUPFAM" id="SSF52799">
    <property type="entry name" value="(Phosphotyrosine protein) phosphatases II"/>
    <property type="match status" value="1"/>
</dbReference>
<dbReference type="PROSITE" id="PS00383">
    <property type="entry name" value="TYR_PHOSPHATASE_1"/>
    <property type="match status" value="1"/>
</dbReference>
<dbReference type="PROSITE" id="PS50056">
    <property type="entry name" value="TYR_PHOSPHATASE_2"/>
    <property type="match status" value="1"/>
</dbReference>
<dbReference type="PROSITE" id="PS50054">
    <property type="entry name" value="TYR_PHOSPHATASE_DUAL"/>
    <property type="match status" value="1"/>
</dbReference>
<gene>
    <name type="primary">Dusp18</name>
</gene>
<organism>
    <name type="scientific">Mus musculus</name>
    <name type="common">Mouse</name>
    <dbReference type="NCBI Taxonomy" id="10090"/>
    <lineage>
        <taxon>Eukaryota</taxon>
        <taxon>Metazoa</taxon>
        <taxon>Chordata</taxon>
        <taxon>Craniata</taxon>
        <taxon>Vertebrata</taxon>
        <taxon>Euteleostomi</taxon>
        <taxon>Mammalia</taxon>
        <taxon>Eutheria</taxon>
        <taxon>Euarchontoglires</taxon>
        <taxon>Glires</taxon>
        <taxon>Rodentia</taxon>
        <taxon>Myomorpha</taxon>
        <taxon>Muroidea</taxon>
        <taxon>Muridae</taxon>
        <taxon>Murinae</taxon>
        <taxon>Mus</taxon>
        <taxon>Mus</taxon>
    </lineage>
</organism>
<reference key="1">
    <citation type="journal article" date="2005" name="Science">
        <title>The transcriptional landscape of the mammalian genome.</title>
        <authorList>
            <person name="Carninci P."/>
            <person name="Kasukawa T."/>
            <person name="Katayama S."/>
            <person name="Gough J."/>
            <person name="Frith M.C."/>
            <person name="Maeda N."/>
            <person name="Oyama R."/>
            <person name="Ravasi T."/>
            <person name="Lenhard B."/>
            <person name="Wells C."/>
            <person name="Kodzius R."/>
            <person name="Shimokawa K."/>
            <person name="Bajic V.B."/>
            <person name="Brenner S.E."/>
            <person name="Batalov S."/>
            <person name="Forrest A.R."/>
            <person name="Zavolan M."/>
            <person name="Davis M.J."/>
            <person name="Wilming L.G."/>
            <person name="Aidinis V."/>
            <person name="Allen J.E."/>
            <person name="Ambesi-Impiombato A."/>
            <person name="Apweiler R."/>
            <person name="Aturaliya R.N."/>
            <person name="Bailey T.L."/>
            <person name="Bansal M."/>
            <person name="Baxter L."/>
            <person name="Beisel K.W."/>
            <person name="Bersano T."/>
            <person name="Bono H."/>
            <person name="Chalk A.M."/>
            <person name="Chiu K.P."/>
            <person name="Choudhary V."/>
            <person name="Christoffels A."/>
            <person name="Clutterbuck D.R."/>
            <person name="Crowe M.L."/>
            <person name="Dalla E."/>
            <person name="Dalrymple B.P."/>
            <person name="de Bono B."/>
            <person name="Della Gatta G."/>
            <person name="di Bernardo D."/>
            <person name="Down T."/>
            <person name="Engstrom P."/>
            <person name="Fagiolini M."/>
            <person name="Faulkner G."/>
            <person name="Fletcher C.F."/>
            <person name="Fukushima T."/>
            <person name="Furuno M."/>
            <person name="Futaki S."/>
            <person name="Gariboldi M."/>
            <person name="Georgii-Hemming P."/>
            <person name="Gingeras T.R."/>
            <person name="Gojobori T."/>
            <person name="Green R.E."/>
            <person name="Gustincich S."/>
            <person name="Harbers M."/>
            <person name="Hayashi Y."/>
            <person name="Hensch T.K."/>
            <person name="Hirokawa N."/>
            <person name="Hill D."/>
            <person name="Huminiecki L."/>
            <person name="Iacono M."/>
            <person name="Ikeo K."/>
            <person name="Iwama A."/>
            <person name="Ishikawa T."/>
            <person name="Jakt M."/>
            <person name="Kanapin A."/>
            <person name="Katoh M."/>
            <person name="Kawasawa Y."/>
            <person name="Kelso J."/>
            <person name="Kitamura H."/>
            <person name="Kitano H."/>
            <person name="Kollias G."/>
            <person name="Krishnan S.P."/>
            <person name="Kruger A."/>
            <person name="Kummerfeld S.K."/>
            <person name="Kurochkin I.V."/>
            <person name="Lareau L.F."/>
            <person name="Lazarevic D."/>
            <person name="Lipovich L."/>
            <person name="Liu J."/>
            <person name="Liuni S."/>
            <person name="McWilliam S."/>
            <person name="Madan Babu M."/>
            <person name="Madera M."/>
            <person name="Marchionni L."/>
            <person name="Matsuda H."/>
            <person name="Matsuzawa S."/>
            <person name="Miki H."/>
            <person name="Mignone F."/>
            <person name="Miyake S."/>
            <person name="Morris K."/>
            <person name="Mottagui-Tabar S."/>
            <person name="Mulder N."/>
            <person name="Nakano N."/>
            <person name="Nakauchi H."/>
            <person name="Ng P."/>
            <person name="Nilsson R."/>
            <person name="Nishiguchi S."/>
            <person name="Nishikawa S."/>
            <person name="Nori F."/>
            <person name="Ohara O."/>
            <person name="Okazaki Y."/>
            <person name="Orlando V."/>
            <person name="Pang K.C."/>
            <person name="Pavan W.J."/>
            <person name="Pavesi G."/>
            <person name="Pesole G."/>
            <person name="Petrovsky N."/>
            <person name="Piazza S."/>
            <person name="Reed J."/>
            <person name="Reid J.F."/>
            <person name="Ring B.Z."/>
            <person name="Ringwald M."/>
            <person name="Rost B."/>
            <person name="Ruan Y."/>
            <person name="Salzberg S.L."/>
            <person name="Sandelin A."/>
            <person name="Schneider C."/>
            <person name="Schoenbach C."/>
            <person name="Sekiguchi K."/>
            <person name="Semple C.A."/>
            <person name="Seno S."/>
            <person name="Sessa L."/>
            <person name="Sheng Y."/>
            <person name="Shibata Y."/>
            <person name="Shimada H."/>
            <person name="Shimada K."/>
            <person name="Silva D."/>
            <person name="Sinclair B."/>
            <person name="Sperling S."/>
            <person name="Stupka E."/>
            <person name="Sugiura K."/>
            <person name="Sultana R."/>
            <person name="Takenaka Y."/>
            <person name="Taki K."/>
            <person name="Tammoja K."/>
            <person name="Tan S.L."/>
            <person name="Tang S."/>
            <person name="Taylor M.S."/>
            <person name="Tegner J."/>
            <person name="Teichmann S.A."/>
            <person name="Ueda H.R."/>
            <person name="van Nimwegen E."/>
            <person name="Verardo R."/>
            <person name="Wei C.L."/>
            <person name="Yagi K."/>
            <person name="Yamanishi H."/>
            <person name="Zabarovsky E."/>
            <person name="Zhu S."/>
            <person name="Zimmer A."/>
            <person name="Hide W."/>
            <person name="Bult C."/>
            <person name="Grimmond S.M."/>
            <person name="Teasdale R.D."/>
            <person name="Liu E.T."/>
            <person name="Brusic V."/>
            <person name="Quackenbush J."/>
            <person name="Wahlestedt C."/>
            <person name="Mattick J.S."/>
            <person name="Hume D.A."/>
            <person name="Kai C."/>
            <person name="Sasaki D."/>
            <person name="Tomaru Y."/>
            <person name="Fukuda S."/>
            <person name="Kanamori-Katayama M."/>
            <person name="Suzuki M."/>
            <person name="Aoki J."/>
            <person name="Arakawa T."/>
            <person name="Iida J."/>
            <person name="Imamura K."/>
            <person name="Itoh M."/>
            <person name="Kato T."/>
            <person name="Kawaji H."/>
            <person name="Kawagashira N."/>
            <person name="Kawashima T."/>
            <person name="Kojima M."/>
            <person name="Kondo S."/>
            <person name="Konno H."/>
            <person name="Nakano K."/>
            <person name="Ninomiya N."/>
            <person name="Nishio T."/>
            <person name="Okada M."/>
            <person name="Plessy C."/>
            <person name="Shibata K."/>
            <person name="Shiraki T."/>
            <person name="Suzuki S."/>
            <person name="Tagami M."/>
            <person name="Waki K."/>
            <person name="Watahiki A."/>
            <person name="Okamura-Oho Y."/>
            <person name="Suzuki H."/>
            <person name="Kawai J."/>
            <person name="Hayashizaki Y."/>
        </authorList>
    </citation>
    <scope>NUCLEOTIDE SEQUENCE [LARGE SCALE MRNA]</scope>
    <source>
        <strain>C57BL/6J</strain>
        <tissue>Head</tissue>
        <tissue>Testis</tissue>
    </source>
</reference>
<reference key="2">
    <citation type="journal article" date="2009" name="PLoS Biol.">
        <title>Lineage-specific biology revealed by a finished genome assembly of the mouse.</title>
        <authorList>
            <person name="Church D.M."/>
            <person name="Goodstadt L."/>
            <person name="Hillier L.W."/>
            <person name="Zody M.C."/>
            <person name="Goldstein S."/>
            <person name="She X."/>
            <person name="Bult C.J."/>
            <person name="Agarwala R."/>
            <person name="Cherry J.L."/>
            <person name="DiCuccio M."/>
            <person name="Hlavina W."/>
            <person name="Kapustin Y."/>
            <person name="Meric P."/>
            <person name="Maglott D."/>
            <person name="Birtle Z."/>
            <person name="Marques A.C."/>
            <person name="Graves T."/>
            <person name="Zhou S."/>
            <person name="Teague B."/>
            <person name="Potamousis K."/>
            <person name="Churas C."/>
            <person name="Place M."/>
            <person name="Herschleb J."/>
            <person name="Runnheim R."/>
            <person name="Forrest D."/>
            <person name="Amos-Landgraf J."/>
            <person name="Schwartz D.C."/>
            <person name="Cheng Z."/>
            <person name="Lindblad-Toh K."/>
            <person name="Eichler E.E."/>
            <person name="Ponting C.P."/>
        </authorList>
    </citation>
    <scope>NUCLEOTIDE SEQUENCE [LARGE SCALE GENOMIC DNA]</scope>
    <source>
        <strain>C57BL/6J</strain>
    </source>
</reference>
<reference key="3">
    <citation type="journal article" date="2004" name="Genome Res.">
        <title>The status, quality, and expansion of the NIH full-length cDNA project: the Mammalian Gene Collection (MGC).</title>
        <authorList>
            <consortium name="The MGC Project Team"/>
        </authorList>
    </citation>
    <scope>NUCLEOTIDE SEQUENCE [LARGE SCALE MRNA]</scope>
    <source>
        <strain>Czech II</strain>
        <tissue>Mammary tumor</tissue>
    </source>
</reference>
<reference key="4">
    <citation type="journal article" date="2008" name="J. Biol. Chem.">
        <title>Dual specificity phosphatases 18 and 21 target to opposing sides of the mitochondrial inner membrane.</title>
        <authorList>
            <person name="Rardin M.J."/>
            <person name="Wiley S.E."/>
            <person name="Murphy A.N."/>
            <person name="Pagliarini D.J."/>
            <person name="Dixon J.E."/>
        </authorList>
    </citation>
    <scope>CATALYTIC ACTIVITY</scope>
    <scope>SUBCELLULAR LOCATION</scope>
</reference>
<keyword id="KW-0963">Cytoplasm</keyword>
<keyword id="KW-0378">Hydrolase</keyword>
<keyword id="KW-0472">Membrane</keyword>
<keyword id="KW-0496">Mitochondrion</keyword>
<keyword id="KW-0999">Mitochondrion inner membrane</keyword>
<keyword id="KW-0539">Nucleus</keyword>
<keyword id="KW-0904">Protein phosphatase</keyword>
<keyword id="KW-1185">Reference proteome</keyword>
<accession>Q8VE01</accession>
<evidence type="ECO:0000250" key="1">
    <source>
        <dbReference type="UniProtKB" id="Q8NEJ0"/>
    </source>
</evidence>
<evidence type="ECO:0000255" key="2">
    <source>
        <dbReference type="PROSITE-ProRule" id="PRU00160"/>
    </source>
</evidence>
<evidence type="ECO:0000255" key="3">
    <source>
        <dbReference type="PROSITE-ProRule" id="PRU10044"/>
    </source>
</evidence>
<evidence type="ECO:0000269" key="4">
    <source>
    </source>
</evidence>
<evidence type="ECO:0000305" key="5"/>
<protein>
    <recommendedName>
        <fullName>Dual specificity protein phosphatase 18</fullName>
        <ecNumber evidence="4">3.1.3.16</ecNumber>
        <ecNumber evidence="4">3.1.3.48</ecNumber>
    </recommendedName>
</protein>
<feature type="chain" id="PRO_0000094829" description="Dual specificity protein phosphatase 18">
    <location>
        <begin position="1"/>
        <end position="188"/>
    </location>
</feature>
<feature type="domain" description="Tyrosine-protein phosphatase" evidence="2">
    <location>
        <begin position="19"/>
        <end position="160"/>
    </location>
</feature>
<feature type="region of interest" description="Sufficient for mitochondrial localization">
    <location>
        <begin position="95"/>
        <end position="141"/>
    </location>
</feature>
<feature type="active site" description="Phosphocysteine intermediate" evidence="2">
    <location>
        <position position="104"/>
    </location>
</feature>
<name>DUS18_MOUSE</name>
<comment type="function">
    <text evidence="1">Can dephosphorylate single and diphosphorylated synthetic MAPK peptides, with preference for the phosphotyrosine and diphosphorylated forms over phosphothreonine. In vitro, dephosphorylates p-nitrophenyl phosphate (pNPP).</text>
</comment>
<comment type="catalytic activity">
    <reaction evidence="3 4">
        <text>O-phospho-L-tyrosyl-[protein] + H2O = L-tyrosyl-[protein] + phosphate</text>
        <dbReference type="Rhea" id="RHEA:10684"/>
        <dbReference type="Rhea" id="RHEA-COMP:10136"/>
        <dbReference type="Rhea" id="RHEA-COMP:20101"/>
        <dbReference type="ChEBI" id="CHEBI:15377"/>
        <dbReference type="ChEBI" id="CHEBI:43474"/>
        <dbReference type="ChEBI" id="CHEBI:46858"/>
        <dbReference type="ChEBI" id="CHEBI:61978"/>
        <dbReference type="EC" id="3.1.3.48"/>
    </reaction>
</comment>
<comment type="catalytic activity">
    <reaction evidence="4">
        <text>O-phospho-L-seryl-[protein] + H2O = L-seryl-[protein] + phosphate</text>
        <dbReference type="Rhea" id="RHEA:20629"/>
        <dbReference type="Rhea" id="RHEA-COMP:9863"/>
        <dbReference type="Rhea" id="RHEA-COMP:11604"/>
        <dbReference type="ChEBI" id="CHEBI:15377"/>
        <dbReference type="ChEBI" id="CHEBI:29999"/>
        <dbReference type="ChEBI" id="CHEBI:43474"/>
        <dbReference type="ChEBI" id="CHEBI:83421"/>
        <dbReference type="EC" id="3.1.3.16"/>
    </reaction>
</comment>
<comment type="catalytic activity">
    <reaction evidence="4">
        <text>O-phospho-L-threonyl-[protein] + H2O = L-threonyl-[protein] + phosphate</text>
        <dbReference type="Rhea" id="RHEA:47004"/>
        <dbReference type="Rhea" id="RHEA-COMP:11060"/>
        <dbReference type="Rhea" id="RHEA-COMP:11605"/>
        <dbReference type="ChEBI" id="CHEBI:15377"/>
        <dbReference type="ChEBI" id="CHEBI:30013"/>
        <dbReference type="ChEBI" id="CHEBI:43474"/>
        <dbReference type="ChEBI" id="CHEBI:61977"/>
        <dbReference type="EC" id="3.1.3.16"/>
    </reaction>
</comment>
<comment type="subcellular location">
    <subcellularLocation>
        <location evidence="4">Cytoplasm</location>
    </subcellularLocation>
    <subcellularLocation>
        <location evidence="1">Nucleus</location>
    </subcellularLocation>
    <subcellularLocation>
        <location evidence="4">Mitochondrion inner membrane</location>
        <topology evidence="4">Peripheral membrane protein</topology>
        <orientation evidence="4">Intermembrane side</orientation>
    </subcellularLocation>
    <text evidence="4">Translocates to cytoplasm in response to apoptotic stimuli such as staurosporine treatment.</text>
</comment>
<comment type="similarity">
    <text evidence="5">Belongs to the protein-tyrosine phosphatase family. Non-receptor class dual specificity subfamily.</text>
</comment>